<accession>Q1CL31</accession>
<accession>C4GQP6</accession>
<gene>
    <name type="ordered locus">YPN_0967</name>
    <name type="ORF">YP516_1049</name>
</gene>
<protein>
    <recommendedName>
        <fullName evidence="1">Nucleoid-associated protein YPN_0967</fullName>
    </recommendedName>
</protein>
<name>Y967_YERPN</name>
<keyword id="KW-0963">Cytoplasm</keyword>
<keyword id="KW-0238">DNA-binding</keyword>
<sequence length="110" mass="12093">MFGKGGIGNLMKQAQQMQEKMQQMQEEVAKLEVTGESGAGLVKVTINGAHNCRRVEIDPSLLVEDDKEMLEDLIAAALNDAARRIDETQKEKMASVSNGMQLPPGFKMPF</sequence>
<reference key="1">
    <citation type="journal article" date="2006" name="J. Bacteriol.">
        <title>Complete genome sequence of Yersinia pestis strains Antiqua and Nepal516: evidence of gene reduction in an emerging pathogen.</title>
        <authorList>
            <person name="Chain P.S.G."/>
            <person name="Hu P."/>
            <person name="Malfatti S.A."/>
            <person name="Radnedge L."/>
            <person name="Larimer F."/>
            <person name="Vergez L.M."/>
            <person name="Worsham P."/>
            <person name="Chu M.C."/>
            <person name="Andersen G.L."/>
        </authorList>
    </citation>
    <scope>NUCLEOTIDE SEQUENCE [LARGE SCALE GENOMIC DNA]</scope>
    <source>
        <strain>Nepal516</strain>
    </source>
</reference>
<reference key="2">
    <citation type="submission" date="2009-04" db="EMBL/GenBank/DDBJ databases">
        <title>Yersinia pestis Nepal516A whole genome shotgun sequencing project.</title>
        <authorList>
            <person name="Plunkett G. III"/>
            <person name="Anderson B.D."/>
            <person name="Baumler D.J."/>
            <person name="Burland V."/>
            <person name="Cabot E.L."/>
            <person name="Glasner J.D."/>
            <person name="Mau B."/>
            <person name="Neeno-Eckwall E."/>
            <person name="Perna N.T."/>
            <person name="Munk A.C."/>
            <person name="Tapia R."/>
            <person name="Green L.D."/>
            <person name="Rogers Y.C."/>
            <person name="Detter J.C."/>
            <person name="Bruce D.C."/>
            <person name="Brettin T.S."/>
        </authorList>
    </citation>
    <scope>NUCLEOTIDE SEQUENCE [LARGE SCALE GENOMIC DNA]</scope>
    <source>
        <strain>Nepal516</strain>
    </source>
</reference>
<dbReference type="EMBL" id="CP000305">
    <property type="protein sequence ID" value="ABG17299.1"/>
    <property type="molecule type" value="Genomic_DNA"/>
</dbReference>
<dbReference type="EMBL" id="ACNQ01000008">
    <property type="protein sequence ID" value="EEO77387.1"/>
    <property type="molecule type" value="Genomic_DNA"/>
</dbReference>
<dbReference type="RefSeq" id="WP_002208604.1">
    <property type="nucleotide sequence ID" value="NZ_ACNQ01000008.1"/>
</dbReference>
<dbReference type="SMR" id="Q1CL31"/>
<dbReference type="KEGG" id="ypn:YPN_0967"/>
<dbReference type="HOGENOM" id="CLU_140930_0_0_6"/>
<dbReference type="Proteomes" id="UP000008936">
    <property type="component" value="Chromosome"/>
</dbReference>
<dbReference type="GO" id="GO:0043590">
    <property type="term" value="C:bacterial nucleoid"/>
    <property type="evidence" value="ECO:0007669"/>
    <property type="project" value="UniProtKB-UniRule"/>
</dbReference>
<dbReference type="GO" id="GO:0005829">
    <property type="term" value="C:cytosol"/>
    <property type="evidence" value="ECO:0007669"/>
    <property type="project" value="TreeGrafter"/>
</dbReference>
<dbReference type="GO" id="GO:0003677">
    <property type="term" value="F:DNA binding"/>
    <property type="evidence" value="ECO:0007669"/>
    <property type="project" value="UniProtKB-UniRule"/>
</dbReference>
<dbReference type="FunFam" id="3.30.1310.10:FF:000001">
    <property type="entry name" value="Nucleoid-associated protein YbaB"/>
    <property type="match status" value="1"/>
</dbReference>
<dbReference type="Gene3D" id="3.30.1310.10">
    <property type="entry name" value="Nucleoid-associated protein YbaB-like domain"/>
    <property type="match status" value="1"/>
</dbReference>
<dbReference type="HAMAP" id="MF_00274">
    <property type="entry name" value="DNA_YbaB_EbfC"/>
    <property type="match status" value="1"/>
</dbReference>
<dbReference type="InterPro" id="IPR036894">
    <property type="entry name" value="YbaB-like_sf"/>
</dbReference>
<dbReference type="InterPro" id="IPR004401">
    <property type="entry name" value="YbaB/EbfC"/>
</dbReference>
<dbReference type="NCBIfam" id="TIGR00103">
    <property type="entry name" value="DNA_YbaB_EbfC"/>
    <property type="match status" value="1"/>
</dbReference>
<dbReference type="PANTHER" id="PTHR33449">
    <property type="entry name" value="NUCLEOID-ASSOCIATED PROTEIN YBAB"/>
    <property type="match status" value="1"/>
</dbReference>
<dbReference type="PANTHER" id="PTHR33449:SF1">
    <property type="entry name" value="NUCLEOID-ASSOCIATED PROTEIN YBAB"/>
    <property type="match status" value="1"/>
</dbReference>
<dbReference type="Pfam" id="PF02575">
    <property type="entry name" value="YbaB_DNA_bd"/>
    <property type="match status" value="1"/>
</dbReference>
<dbReference type="PIRSF" id="PIRSF004555">
    <property type="entry name" value="UCP004555"/>
    <property type="match status" value="1"/>
</dbReference>
<dbReference type="SUPFAM" id="SSF82607">
    <property type="entry name" value="YbaB-like"/>
    <property type="match status" value="1"/>
</dbReference>
<comment type="function">
    <text evidence="1">Binds to DNA and alters its conformation. May be involved in regulation of gene expression, nucleoid organization and DNA protection.</text>
</comment>
<comment type="subunit">
    <text evidence="1">Homodimer.</text>
</comment>
<comment type="subcellular location">
    <subcellularLocation>
        <location evidence="1">Cytoplasm</location>
        <location evidence="1">Nucleoid</location>
    </subcellularLocation>
</comment>
<comment type="similarity">
    <text evidence="1">Belongs to the YbaB/EbfC family.</text>
</comment>
<evidence type="ECO:0000255" key="1">
    <source>
        <dbReference type="HAMAP-Rule" id="MF_00274"/>
    </source>
</evidence>
<evidence type="ECO:0000256" key="2">
    <source>
        <dbReference type="SAM" id="MobiDB-lite"/>
    </source>
</evidence>
<organism>
    <name type="scientific">Yersinia pestis bv. Antiqua (strain Nepal516)</name>
    <dbReference type="NCBI Taxonomy" id="377628"/>
    <lineage>
        <taxon>Bacteria</taxon>
        <taxon>Pseudomonadati</taxon>
        <taxon>Pseudomonadota</taxon>
        <taxon>Gammaproteobacteria</taxon>
        <taxon>Enterobacterales</taxon>
        <taxon>Yersiniaceae</taxon>
        <taxon>Yersinia</taxon>
    </lineage>
</organism>
<feature type="chain" id="PRO_1000003872" description="Nucleoid-associated protein YPN_0967">
    <location>
        <begin position="1"/>
        <end position="110"/>
    </location>
</feature>
<feature type="region of interest" description="Disordered" evidence="2">
    <location>
        <begin position="90"/>
        <end position="110"/>
    </location>
</feature>
<proteinExistence type="inferred from homology"/>